<evidence type="ECO:0000250" key="1">
    <source>
        <dbReference type="UniProtKB" id="Q8NEY1"/>
    </source>
</evidence>
<evidence type="ECO:0000255" key="2"/>
<evidence type="ECO:0000256" key="3">
    <source>
        <dbReference type="SAM" id="MobiDB-lite"/>
    </source>
</evidence>
<evidence type="ECO:0000269" key="4">
    <source>
    </source>
</evidence>
<evidence type="ECO:0000269" key="5">
    <source>
    </source>
</evidence>
<evidence type="ECO:0000303" key="6">
    <source>
    </source>
</evidence>
<evidence type="ECO:0000303" key="7">
    <source>
    </source>
</evidence>
<evidence type="ECO:0000303" key="8">
    <source>
    </source>
</evidence>
<evidence type="ECO:0000305" key="9"/>
<evidence type="ECO:0007744" key="10">
    <source>
    </source>
</evidence>
<evidence type="ECO:0007744" key="11">
    <source>
    </source>
</evidence>
<evidence type="ECO:0007744" key="12">
    <source>
    </source>
</evidence>
<protein>
    <recommendedName>
        <fullName>Neuron navigator 1</fullName>
    </recommendedName>
    <alternativeName>
        <fullName>Pore membrane and/or filament-interacting-like protein 3</fullName>
    </alternativeName>
</protein>
<comment type="function">
    <text evidence="5">May be involved in neuronal migration.</text>
</comment>
<comment type="subunit">
    <text evidence="5">Interacts with tubulin.</text>
</comment>
<comment type="subcellular location">
    <subcellularLocation>
        <location evidence="5">Cytoplasm</location>
        <location evidence="5">Cytoskeleton</location>
    </subcellularLocation>
    <text>Associates with a subset of microtubule plus ends. Enriched in neuronal growth cones.</text>
</comment>
<comment type="alternative products">
    <event type="alternative splicing"/>
    <isoform>
        <id>Q8CH77-1</id>
        <name>1</name>
        <sequence type="displayed"/>
    </isoform>
    <isoform>
        <id>Q8CH77-2</id>
        <name>2</name>
        <sequence type="described" ref="VSP_025262 VSP_025263"/>
    </isoform>
    <isoform>
        <id>Q8CH77-3</id>
        <name>3</name>
        <sequence type="described" ref="VSP_025263 VSP_025266 VSP_025267"/>
    </isoform>
    <isoform>
        <id>Q8CH77-4</id>
        <name>4</name>
        <sequence type="described" ref="VSP_025260 VSP_025261 VSP_025264 VSP_025265"/>
    </isoform>
</comment>
<comment type="tissue specificity">
    <text evidence="5">Expressed in heart and brain. Present in brain (at protein level). In adult brain, found almost exclusively in areas of secondary neurogenesis from the hippocampus and the subventricular zone.</text>
</comment>
<comment type="developmental stage">
    <text evidence="4 5">Expressed in neural structures at 10 dpc. At 13 dpc and 15 dpc, highly expressed in neural tube, somites, heart and dispersed cells in tongue and face. At P5, widely expressed through the central nervous system in post-mitotic post-migratory zones. Brain expression decreases rapidly from P5 to P21 (at protein level).</text>
</comment>
<comment type="similarity">
    <text evidence="9">Belongs to the Nav/unc-53 family.</text>
</comment>
<comment type="sequence caution" evidence="9">
    <conflict type="erroneous initiation">
        <sequence resource="EMBL-CDS" id="BAC65740"/>
    </conflict>
</comment>
<proteinExistence type="evidence at protein level"/>
<gene>
    <name type="primary">Nav1</name>
    <name type="synonym">Kiaa1151</name>
    <name type="synonym">Pomfil3</name>
</gene>
<feature type="chain" id="PRO_0000286975" description="Neuron navigator 1">
    <location>
        <begin position="1"/>
        <end position="1875"/>
    </location>
</feature>
<feature type="region of interest" description="Disordered" evidence="3">
    <location>
        <begin position="1"/>
        <end position="63"/>
    </location>
</feature>
<feature type="region of interest" description="Disordered" evidence="3">
    <location>
        <begin position="115"/>
        <end position="230"/>
    </location>
</feature>
<feature type="region of interest" description="Disordered" evidence="3">
    <location>
        <begin position="280"/>
        <end position="339"/>
    </location>
</feature>
<feature type="region of interest" description="Disordered" evidence="3">
    <location>
        <begin position="391"/>
        <end position="463"/>
    </location>
</feature>
<feature type="region of interest" description="Disordered" evidence="3">
    <location>
        <begin position="477"/>
        <end position="783"/>
    </location>
</feature>
<feature type="region of interest" description="Disordered" evidence="3">
    <location>
        <begin position="800"/>
        <end position="840"/>
    </location>
</feature>
<feature type="region of interest" description="Disordered" evidence="3">
    <location>
        <begin position="893"/>
        <end position="982"/>
    </location>
</feature>
<feature type="region of interest" description="Disordered" evidence="3">
    <location>
        <begin position="1172"/>
        <end position="1202"/>
    </location>
</feature>
<feature type="region of interest" description="Disordered" evidence="3">
    <location>
        <begin position="1242"/>
        <end position="1306"/>
    </location>
</feature>
<feature type="region of interest" description="Disordered" evidence="3">
    <location>
        <begin position="1359"/>
        <end position="1381"/>
    </location>
</feature>
<feature type="region of interest" description="Disordered" evidence="3">
    <location>
        <begin position="1808"/>
        <end position="1841"/>
    </location>
</feature>
<feature type="coiled-coil region" evidence="2">
    <location>
        <begin position="258"/>
        <end position="283"/>
    </location>
</feature>
<feature type="coiled-coil region" evidence="2">
    <location>
        <begin position="733"/>
        <end position="758"/>
    </location>
</feature>
<feature type="coiled-coil region" evidence="2">
    <location>
        <begin position="1070"/>
        <end position="1161"/>
    </location>
</feature>
<feature type="coiled-coil region" evidence="2">
    <location>
        <begin position="1301"/>
        <end position="1360"/>
    </location>
</feature>
<feature type="compositionally biased region" description="Polar residues" evidence="3">
    <location>
        <begin position="280"/>
        <end position="291"/>
    </location>
</feature>
<feature type="compositionally biased region" description="Low complexity" evidence="3">
    <location>
        <begin position="304"/>
        <end position="318"/>
    </location>
</feature>
<feature type="compositionally biased region" description="Low complexity" evidence="3">
    <location>
        <begin position="414"/>
        <end position="428"/>
    </location>
</feature>
<feature type="compositionally biased region" description="Low complexity" evidence="3">
    <location>
        <begin position="436"/>
        <end position="456"/>
    </location>
</feature>
<feature type="compositionally biased region" description="Basic and acidic residues" evidence="3">
    <location>
        <begin position="479"/>
        <end position="489"/>
    </location>
</feature>
<feature type="compositionally biased region" description="Basic and acidic residues" evidence="3">
    <location>
        <begin position="506"/>
        <end position="522"/>
    </location>
</feature>
<feature type="compositionally biased region" description="Basic and acidic residues" evidence="3">
    <location>
        <begin position="558"/>
        <end position="569"/>
    </location>
</feature>
<feature type="compositionally biased region" description="Basic and acidic residues" evidence="3">
    <location>
        <begin position="584"/>
        <end position="594"/>
    </location>
</feature>
<feature type="compositionally biased region" description="Polar residues" evidence="3">
    <location>
        <begin position="618"/>
        <end position="638"/>
    </location>
</feature>
<feature type="compositionally biased region" description="Polar residues" evidence="3">
    <location>
        <begin position="648"/>
        <end position="658"/>
    </location>
</feature>
<feature type="compositionally biased region" description="Polar residues" evidence="3">
    <location>
        <begin position="696"/>
        <end position="712"/>
    </location>
</feature>
<feature type="compositionally biased region" description="Polar residues" evidence="3">
    <location>
        <begin position="726"/>
        <end position="735"/>
    </location>
</feature>
<feature type="compositionally biased region" description="Polar residues" evidence="3">
    <location>
        <begin position="753"/>
        <end position="772"/>
    </location>
</feature>
<feature type="compositionally biased region" description="Low complexity" evidence="3">
    <location>
        <begin position="807"/>
        <end position="818"/>
    </location>
</feature>
<feature type="compositionally biased region" description="Low complexity" evidence="3">
    <location>
        <begin position="893"/>
        <end position="902"/>
    </location>
</feature>
<feature type="compositionally biased region" description="Low complexity" evidence="3">
    <location>
        <begin position="1179"/>
        <end position="1198"/>
    </location>
</feature>
<feature type="compositionally biased region" description="Polar residues" evidence="3">
    <location>
        <begin position="1244"/>
        <end position="1259"/>
    </location>
</feature>
<feature type="compositionally biased region" description="Low complexity" evidence="3">
    <location>
        <begin position="1260"/>
        <end position="1281"/>
    </location>
</feature>
<feature type="compositionally biased region" description="Polar residues" evidence="3">
    <location>
        <begin position="1365"/>
        <end position="1381"/>
    </location>
</feature>
<feature type="modified residue" description="N-acetylmethionine" evidence="1">
    <location>
        <position position="1"/>
    </location>
</feature>
<feature type="modified residue" description="Phosphoserine" evidence="11">
    <location>
        <position position="93"/>
    </location>
</feature>
<feature type="modified residue" description="Phosphoserine" evidence="1">
    <location>
        <position position="145"/>
    </location>
</feature>
<feature type="modified residue" description="Phosphothreonine" evidence="1">
    <location>
        <position position="162"/>
    </location>
</feature>
<feature type="modified residue" description="Phosphoserine" evidence="11">
    <location>
        <position position="197"/>
    </location>
</feature>
<feature type="modified residue" description="Phosphoserine" evidence="11">
    <location>
        <position position="202"/>
    </location>
</feature>
<feature type="modified residue" description="Phosphoserine" evidence="1">
    <location>
        <position position="299"/>
    </location>
</feature>
<feature type="modified residue" description="Phosphoserine" evidence="1">
    <location>
        <position position="311"/>
    </location>
</feature>
<feature type="modified residue" description="Phosphoserine" evidence="11">
    <location>
        <position position="315"/>
    </location>
</feature>
<feature type="modified residue" description="Phosphoserine" evidence="1">
    <location>
        <position position="365"/>
    </location>
</feature>
<feature type="modified residue" description="Phosphoserine" evidence="11">
    <location>
        <position position="394"/>
    </location>
</feature>
<feature type="modified residue" description="Phosphoserine" evidence="1">
    <location>
        <position position="455"/>
    </location>
</feature>
<feature type="modified residue" description="Phosphoserine" evidence="11">
    <location>
        <position position="477"/>
    </location>
</feature>
<feature type="modified residue" description="Phosphoserine" evidence="11">
    <location>
        <position position="479"/>
    </location>
</feature>
<feature type="modified residue" description="Phosphoserine" evidence="1">
    <location>
        <position position="493"/>
    </location>
</feature>
<feature type="modified residue" description="Phosphoserine" evidence="1">
    <location>
        <position position="531"/>
    </location>
</feature>
<feature type="modified residue" description="Phosphothreonine" evidence="1">
    <location>
        <position position="537"/>
    </location>
</feature>
<feature type="modified residue" description="Phosphoserine" evidence="1">
    <location>
        <position position="544"/>
    </location>
</feature>
<feature type="modified residue" description="Phosphothreonine" evidence="1">
    <location>
        <position position="547"/>
    </location>
</feature>
<feature type="modified residue" description="Phosphothreonine" evidence="1">
    <location>
        <position position="575"/>
    </location>
</feature>
<feature type="modified residue" description="Phosphoserine" evidence="1">
    <location>
        <position position="651"/>
    </location>
</feature>
<feature type="modified residue" description="Omega-N-methylarginine" evidence="12">
    <location>
        <position position="690"/>
    </location>
</feature>
<feature type="modified residue" description="Phosphoserine" evidence="1">
    <location>
        <position position="752"/>
    </location>
</feature>
<feature type="modified residue" description="Phosphoserine" evidence="1">
    <location>
        <position position="756"/>
    </location>
</feature>
<feature type="modified residue" description="Phosphoserine" evidence="1">
    <location>
        <position position="762"/>
    </location>
</feature>
<feature type="modified residue" description="Phosphoserine" evidence="1">
    <location>
        <position position="799"/>
    </location>
</feature>
<feature type="modified residue" description="Phosphoserine" evidence="10 11">
    <location>
        <position position="810"/>
    </location>
</feature>
<feature type="modified residue" description="Phosphoserine" evidence="1">
    <location>
        <position position="998"/>
    </location>
</feature>
<feature type="modified residue" description="Phosphothreonine" evidence="1">
    <location>
        <position position="1004"/>
    </location>
</feature>
<feature type="modified residue" description="Phosphothreonine" evidence="1">
    <location>
        <position position="1168"/>
    </location>
</feature>
<feature type="modified residue" description="Phosphoserine" evidence="11">
    <location>
        <position position="1179"/>
    </location>
</feature>
<feature type="modified residue" description="Phosphoserine" evidence="1">
    <location>
        <position position="1263"/>
    </location>
</feature>
<feature type="modified residue" description="Phosphoserine" evidence="1">
    <location>
        <position position="1380"/>
    </location>
</feature>
<feature type="splice variant" id="VSP_025260" description="In isoform 4." evidence="8">
    <location>
        <begin position="1"/>
        <end position="392"/>
    </location>
</feature>
<feature type="splice variant" id="VSP_025261" description="In isoform 4." evidence="8">
    <original>MSDSDLMGKTMTEDDDITTG</original>
    <variation>MLHLPLPRSGRTANFPRS</variation>
    <location>
        <begin position="393"/>
        <end position="412"/>
    </location>
</feature>
<feature type="splice variant" id="VSP_025262" description="In isoform 2." evidence="6">
    <location>
        <begin position="997"/>
        <end position="1053"/>
    </location>
</feature>
<feature type="splice variant" id="VSP_025263" description="In isoform 2 and isoform 3." evidence="6 7">
    <location>
        <begin position="1212"/>
        <end position="1214"/>
    </location>
</feature>
<feature type="splice variant" id="VSP_025264" description="In isoform 4." evidence="8">
    <original>YELRSSFNK</original>
    <variation>CKGLGIGLC</variation>
    <location>
        <begin position="1213"/>
        <end position="1221"/>
    </location>
</feature>
<feature type="splice variant" id="VSP_025265" description="In isoform 4." evidence="8">
    <location>
        <begin position="1222"/>
        <end position="1875"/>
    </location>
</feature>
<feature type="splice variant" id="VSP_025266" description="In isoform 3." evidence="7">
    <original>I</original>
    <variation>L</variation>
    <location>
        <position position="1225"/>
    </location>
</feature>
<feature type="splice variant" id="VSP_025267" description="In isoform 3." evidence="7">
    <location>
        <begin position="1226"/>
        <end position="1875"/>
    </location>
</feature>
<feature type="sequence conflict" description="In Ref. 1; AAO13290." evidence="9" ref="1">
    <original>G</original>
    <variation>D</variation>
    <location>
        <position position="132"/>
    </location>
</feature>
<feature type="sequence conflict" description="In Ref. 2; BAC65740." evidence="9" ref="2">
    <original>L</original>
    <variation>F</variation>
    <location>
        <position position="310"/>
    </location>
</feature>
<feature type="sequence conflict" description="In Ref. 1; AAO13290." evidence="9" ref="1">
    <original>V</original>
    <variation>G</variation>
    <location>
        <position position="386"/>
    </location>
</feature>
<feature type="sequence conflict" description="In Ref. 1; AAO13290." evidence="9" ref="1">
    <original>A</original>
    <variation>G</variation>
    <location>
        <position position="437"/>
    </location>
</feature>
<feature type="sequence conflict" description="In Ref. 3; BAC38568." evidence="9" ref="3">
    <original>F</original>
    <variation>Y</variation>
    <location>
        <position position="899"/>
    </location>
</feature>
<feature type="sequence conflict" description="In Ref. 4; AAH59840." evidence="9" ref="4">
    <location>
        <position position="933"/>
    </location>
</feature>
<feature type="sequence conflict" description="In Ref. 4; AAH59840." evidence="9" ref="4">
    <original>E</original>
    <variation>D</variation>
    <location>
        <position position="954"/>
    </location>
</feature>
<feature type="sequence conflict" description="In Ref. 1; AAO13290." evidence="9" ref="1">
    <original>R</original>
    <variation>G</variation>
    <location>
        <position position="960"/>
    </location>
</feature>
<feature type="sequence conflict" description="In Ref. 1; AAO13290." evidence="9" ref="1">
    <original>A</original>
    <variation>E</variation>
    <location>
        <position position="975"/>
    </location>
</feature>
<feature type="sequence conflict" description="In Ref. 1; AAO13290." evidence="9" ref="1">
    <original>P</original>
    <variation>L</variation>
    <location>
        <position position="981"/>
    </location>
</feature>
<feature type="sequence conflict" description="In Ref. 4; AAH80292." evidence="9" ref="4">
    <original>P</original>
    <variation>S</variation>
    <location>
        <position position="1361"/>
    </location>
</feature>
<feature type="sequence conflict" description="In Ref. 2; BAC65740." evidence="9" ref="2">
    <original>G</original>
    <variation>V</variation>
    <location>
        <position position="1686"/>
    </location>
</feature>
<reference key="1">
    <citation type="journal article" date="2005" name="Mol. Cell. Neurosci.">
        <title>Mouse neuron navigator 1, a novel microtubule-associated protein involved in neuronal migration.</title>
        <authorList>
            <person name="Martinez-Lopez M.J."/>
            <person name="Alcantara S."/>
            <person name="Mascaro C."/>
            <person name="Perez-Branguli F."/>
            <person name="Ruiz-Lozano P."/>
            <person name="Maes T."/>
            <person name="Soriano E."/>
            <person name="Buesa C."/>
        </authorList>
    </citation>
    <scope>NUCLEOTIDE SEQUENCE [MRNA] (ISOFORM 1)</scope>
    <scope>ALTERNATIVE SPLICING</scope>
    <scope>TISSUE SPECIFICITY</scope>
    <scope>SUBCELLULAR LOCATION</scope>
    <scope>DEVELOPMENTAL STAGE</scope>
    <scope>INTERACTION WITH TUBULIN</scope>
    <scope>FUNCTION</scope>
    <source>
        <strain>ICR</strain>
        <tissue>Brain</tissue>
    </source>
</reference>
<reference key="2">
    <citation type="journal article" date="2003" name="DNA Res.">
        <title>Prediction of the coding sequences of mouse homologues of KIAA gene: II. The complete nucleotide sequences of 400 mouse KIAA-homologous cDNAs identified by screening of terminal sequences of cDNA clones randomly sampled from size-fractionated libraries.</title>
        <authorList>
            <person name="Okazaki N."/>
            <person name="Kikuno R."/>
            <person name="Ohara R."/>
            <person name="Inamoto S."/>
            <person name="Aizawa H."/>
            <person name="Yuasa S."/>
            <person name="Nakajima D."/>
            <person name="Nagase T."/>
            <person name="Ohara O."/>
            <person name="Koga H."/>
        </authorList>
    </citation>
    <scope>NUCLEOTIDE SEQUENCE [LARGE SCALE MRNA] (ISOFORM 2)</scope>
    <source>
        <tissue>Brain</tissue>
    </source>
</reference>
<reference key="3">
    <citation type="journal article" date="2005" name="Science">
        <title>The transcriptional landscape of the mammalian genome.</title>
        <authorList>
            <person name="Carninci P."/>
            <person name="Kasukawa T."/>
            <person name="Katayama S."/>
            <person name="Gough J."/>
            <person name="Frith M.C."/>
            <person name="Maeda N."/>
            <person name="Oyama R."/>
            <person name="Ravasi T."/>
            <person name="Lenhard B."/>
            <person name="Wells C."/>
            <person name="Kodzius R."/>
            <person name="Shimokawa K."/>
            <person name="Bajic V.B."/>
            <person name="Brenner S.E."/>
            <person name="Batalov S."/>
            <person name="Forrest A.R."/>
            <person name="Zavolan M."/>
            <person name="Davis M.J."/>
            <person name="Wilming L.G."/>
            <person name="Aidinis V."/>
            <person name="Allen J.E."/>
            <person name="Ambesi-Impiombato A."/>
            <person name="Apweiler R."/>
            <person name="Aturaliya R.N."/>
            <person name="Bailey T.L."/>
            <person name="Bansal M."/>
            <person name="Baxter L."/>
            <person name="Beisel K.W."/>
            <person name="Bersano T."/>
            <person name="Bono H."/>
            <person name="Chalk A.M."/>
            <person name="Chiu K.P."/>
            <person name="Choudhary V."/>
            <person name="Christoffels A."/>
            <person name="Clutterbuck D.R."/>
            <person name="Crowe M.L."/>
            <person name="Dalla E."/>
            <person name="Dalrymple B.P."/>
            <person name="de Bono B."/>
            <person name="Della Gatta G."/>
            <person name="di Bernardo D."/>
            <person name="Down T."/>
            <person name="Engstrom P."/>
            <person name="Fagiolini M."/>
            <person name="Faulkner G."/>
            <person name="Fletcher C.F."/>
            <person name="Fukushima T."/>
            <person name="Furuno M."/>
            <person name="Futaki S."/>
            <person name="Gariboldi M."/>
            <person name="Georgii-Hemming P."/>
            <person name="Gingeras T.R."/>
            <person name="Gojobori T."/>
            <person name="Green R.E."/>
            <person name="Gustincich S."/>
            <person name="Harbers M."/>
            <person name="Hayashi Y."/>
            <person name="Hensch T.K."/>
            <person name="Hirokawa N."/>
            <person name="Hill D."/>
            <person name="Huminiecki L."/>
            <person name="Iacono M."/>
            <person name="Ikeo K."/>
            <person name="Iwama A."/>
            <person name="Ishikawa T."/>
            <person name="Jakt M."/>
            <person name="Kanapin A."/>
            <person name="Katoh M."/>
            <person name="Kawasawa Y."/>
            <person name="Kelso J."/>
            <person name="Kitamura H."/>
            <person name="Kitano H."/>
            <person name="Kollias G."/>
            <person name="Krishnan S.P."/>
            <person name="Kruger A."/>
            <person name="Kummerfeld S.K."/>
            <person name="Kurochkin I.V."/>
            <person name="Lareau L.F."/>
            <person name="Lazarevic D."/>
            <person name="Lipovich L."/>
            <person name="Liu J."/>
            <person name="Liuni S."/>
            <person name="McWilliam S."/>
            <person name="Madan Babu M."/>
            <person name="Madera M."/>
            <person name="Marchionni L."/>
            <person name="Matsuda H."/>
            <person name="Matsuzawa S."/>
            <person name="Miki H."/>
            <person name="Mignone F."/>
            <person name="Miyake S."/>
            <person name="Morris K."/>
            <person name="Mottagui-Tabar S."/>
            <person name="Mulder N."/>
            <person name="Nakano N."/>
            <person name="Nakauchi H."/>
            <person name="Ng P."/>
            <person name="Nilsson R."/>
            <person name="Nishiguchi S."/>
            <person name="Nishikawa S."/>
            <person name="Nori F."/>
            <person name="Ohara O."/>
            <person name="Okazaki Y."/>
            <person name="Orlando V."/>
            <person name="Pang K.C."/>
            <person name="Pavan W.J."/>
            <person name="Pavesi G."/>
            <person name="Pesole G."/>
            <person name="Petrovsky N."/>
            <person name="Piazza S."/>
            <person name="Reed J."/>
            <person name="Reid J.F."/>
            <person name="Ring B.Z."/>
            <person name="Ringwald M."/>
            <person name="Rost B."/>
            <person name="Ruan Y."/>
            <person name="Salzberg S.L."/>
            <person name="Sandelin A."/>
            <person name="Schneider C."/>
            <person name="Schoenbach C."/>
            <person name="Sekiguchi K."/>
            <person name="Semple C.A."/>
            <person name="Seno S."/>
            <person name="Sessa L."/>
            <person name="Sheng Y."/>
            <person name="Shibata Y."/>
            <person name="Shimada H."/>
            <person name="Shimada K."/>
            <person name="Silva D."/>
            <person name="Sinclair B."/>
            <person name="Sperling S."/>
            <person name="Stupka E."/>
            <person name="Sugiura K."/>
            <person name="Sultana R."/>
            <person name="Takenaka Y."/>
            <person name="Taki K."/>
            <person name="Tammoja K."/>
            <person name="Tan S.L."/>
            <person name="Tang S."/>
            <person name="Taylor M.S."/>
            <person name="Tegner J."/>
            <person name="Teichmann S.A."/>
            <person name="Ueda H.R."/>
            <person name="van Nimwegen E."/>
            <person name="Verardo R."/>
            <person name="Wei C.L."/>
            <person name="Yagi K."/>
            <person name="Yamanishi H."/>
            <person name="Zabarovsky E."/>
            <person name="Zhu S."/>
            <person name="Zimmer A."/>
            <person name="Hide W."/>
            <person name="Bult C."/>
            <person name="Grimmond S.M."/>
            <person name="Teasdale R.D."/>
            <person name="Liu E.T."/>
            <person name="Brusic V."/>
            <person name="Quackenbush J."/>
            <person name="Wahlestedt C."/>
            <person name="Mattick J.S."/>
            <person name="Hume D.A."/>
            <person name="Kai C."/>
            <person name="Sasaki D."/>
            <person name="Tomaru Y."/>
            <person name="Fukuda S."/>
            <person name="Kanamori-Katayama M."/>
            <person name="Suzuki M."/>
            <person name="Aoki J."/>
            <person name="Arakawa T."/>
            <person name="Iida J."/>
            <person name="Imamura K."/>
            <person name="Itoh M."/>
            <person name="Kato T."/>
            <person name="Kawaji H."/>
            <person name="Kawagashira N."/>
            <person name="Kawashima T."/>
            <person name="Kojima M."/>
            <person name="Kondo S."/>
            <person name="Konno H."/>
            <person name="Nakano K."/>
            <person name="Ninomiya N."/>
            <person name="Nishio T."/>
            <person name="Okada M."/>
            <person name="Plessy C."/>
            <person name="Shibata K."/>
            <person name="Shiraki T."/>
            <person name="Suzuki S."/>
            <person name="Tagami M."/>
            <person name="Waki K."/>
            <person name="Watahiki A."/>
            <person name="Okamura-Oho Y."/>
            <person name="Suzuki H."/>
            <person name="Kawai J."/>
            <person name="Hayashizaki Y."/>
        </authorList>
    </citation>
    <scope>NUCLEOTIDE SEQUENCE [LARGE SCALE MRNA] (ISOFORM 4)</scope>
    <scope>NUCLEOTIDE SEQUENCE [LARGE SCALE MRNA] OF 1216-1875 (ISOFORM 1)</scope>
    <source>
        <strain>C57BL/6J</strain>
        <tissue>Cerebellum</tissue>
        <tissue>Eye</tissue>
        <tissue>Thymus</tissue>
    </source>
</reference>
<reference key="4">
    <citation type="journal article" date="2004" name="Genome Res.">
        <title>The status, quality, and expansion of the NIH full-length cDNA project: the Mammalian Gene Collection (MGC).</title>
        <authorList>
            <consortium name="The MGC Project Team"/>
        </authorList>
    </citation>
    <scope>NUCLEOTIDE SEQUENCE [LARGE SCALE MRNA] (ISOFORM 3)</scope>
    <scope>NUCLEOTIDE SEQUENCE [LARGE SCALE MRNA] OF 1299-1875 (ISOFORM 1)</scope>
    <source>
        <strain>C57BL/6J</strain>
        <tissue>Brain</tissue>
    </source>
</reference>
<reference key="5">
    <citation type="journal article" date="2002" name="Gene">
        <title>Pore membrane and/or filament interacting like protein 1 (POMFIL1) is predominantly expressed in the nervous system and encodes different protein isoforms.</title>
        <authorList>
            <person name="Coy J.F."/>
            <person name="Wiemann S."/>
            <person name="Bechmann I."/>
            <person name="Baechner D."/>
            <person name="Nitsch R."/>
            <person name="Kretz O."/>
            <person name="Christiansen H."/>
            <person name="Poustka A."/>
        </authorList>
    </citation>
    <scope>DEVELOPMENTAL STAGE</scope>
</reference>
<reference key="6">
    <citation type="journal article" date="2004" name="Mol. Cell. Proteomics">
        <title>Phosphoproteomic analysis of the developing mouse brain.</title>
        <authorList>
            <person name="Ballif B.A."/>
            <person name="Villen J."/>
            <person name="Beausoleil S.A."/>
            <person name="Schwartz D."/>
            <person name="Gygi S.P."/>
        </authorList>
    </citation>
    <scope>IDENTIFICATION BY MASS SPECTROMETRY [LARGE SCALE ANALYSIS]</scope>
    <source>
        <tissue>Embryonic brain</tissue>
    </source>
</reference>
<reference key="7">
    <citation type="journal article" date="2009" name="Immunity">
        <title>The phagosomal proteome in interferon-gamma-activated macrophages.</title>
        <authorList>
            <person name="Trost M."/>
            <person name="English L."/>
            <person name="Lemieux S."/>
            <person name="Courcelles M."/>
            <person name="Desjardins M."/>
            <person name="Thibault P."/>
        </authorList>
    </citation>
    <scope>PHOSPHORYLATION [LARGE SCALE ANALYSIS] AT SER-810</scope>
    <scope>IDENTIFICATION BY MASS SPECTROMETRY [LARGE SCALE ANALYSIS]</scope>
</reference>
<reference key="8">
    <citation type="journal article" date="2010" name="Cell">
        <title>A tissue-specific atlas of mouse protein phosphorylation and expression.</title>
        <authorList>
            <person name="Huttlin E.L."/>
            <person name="Jedrychowski M.P."/>
            <person name="Elias J.E."/>
            <person name="Goswami T."/>
            <person name="Rad R."/>
            <person name="Beausoleil S.A."/>
            <person name="Villen J."/>
            <person name="Haas W."/>
            <person name="Sowa M.E."/>
            <person name="Gygi S.P."/>
        </authorList>
    </citation>
    <scope>PHOSPHORYLATION [LARGE SCALE ANALYSIS] AT SER-93; SER-197; SER-202; SER-315; SER-394; SER-477; SER-479; SER-810 AND SER-1179</scope>
    <scope>IDENTIFICATION BY MASS SPECTROMETRY [LARGE SCALE ANALYSIS]</scope>
    <source>
        <tissue>Brain</tissue>
        <tissue>Brown adipose tissue</tissue>
        <tissue>Heart</tissue>
        <tissue>Kidney</tissue>
        <tissue>Lung</tissue>
        <tissue>Pancreas</tissue>
        <tissue>Spleen</tissue>
    </source>
</reference>
<reference key="9">
    <citation type="journal article" date="2014" name="Mol. Cell. Proteomics">
        <title>Immunoaffinity enrichment and mass spectrometry analysis of protein methylation.</title>
        <authorList>
            <person name="Guo A."/>
            <person name="Gu H."/>
            <person name="Zhou J."/>
            <person name="Mulhern D."/>
            <person name="Wang Y."/>
            <person name="Lee K.A."/>
            <person name="Yang V."/>
            <person name="Aguiar M."/>
            <person name="Kornhauser J."/>
            <person name="Jia X."/>
            <person name="Ren J."/>
            <person name="Beausoleil S.A."/>
            <person name="Silva J.C."/>
            <person name="Vemulapalli V."/>
            <person name="Bedford M.T."/>
            <person name="Comb M.J."/>
        </authorList>
    </citation>
    <scope>METHYLATION [LARGE SCALE ANALYSIS] AT ARG-690</scope>
    <scope>IDENTIFICATION BY MASS SPECTROMETRY [LARGE SCALE ANALYSIS]</scope>
    <source>
        <tissue>Brain</tissue>
    </source>
</reference>
<name>NAV1_MOUSE</name>
<sequence>MLGSSVKSVQPEVELSGGSGSGGDEGADESRGASRKAAAADGRGMLPKRAKAAGGSGSMAKASAAELKVFKSGSVDSRVPGGLPTSNLRKQKSLTNLSFLTDSEKKLQLYEPEWSDDMAKAPKGLGKLGPKGRETPLMSKTLSKSEHSLFQPKGGSTGGAKTPLAPLAPSLGKPSRIPRGPYAEVKPLSKAPEAAVSDDGKSDDELLSSKAKAQKGSGTVPSAKGQEERAFLKVDPELVVTVLGDLEQLLFSQMLDPESQRKRTVQNVLDLRQNLEETMSSLRGSQVTHSSLEMPCYDSDDANPRSVSSLSNRSSPLSWRYGQSSPRLQAGDAPSVGGSCRSEGPPAWYMHGERAHYSHTMPMRSPSKLSHISRLELVESLDSDEVDLKSGYMSDSDLMGKTMTEDDDITTGWDESSSISSGLSDASDNLSSEEFNASSSLNSLPTTPTASRRSSTIVLRTDSEKRSLAESGLNWFSESEEKTPKKLEYDSGSLKMEPGTSKWRRERPESCDDASKGGELKKPISLGHPGSLKKGKTPPVAVTSPITHTAQSALKVAGKPEGKATDKGKLAVKNTGLQRSSSDAGRDRLSDAKKPPSGIARPSTSGSFGYKKPPPATGTATVMQTGSSATLSKIQKSSGIPVKPVNGRKTSLDVSNSVEPGFLAPGARSNIQYRSLPRPAKSSSMSVTGRGGPRPVSSSIDPSLLSTKQGGLTPSRLKEPSKVASGRSTPAPVNQTDREKEKAKAKAVALDSDNISLKSIGSPESTPKNQASHPPATKLAELPPTPLRATAKSFVKPPSLANLDKVNSNSLDLPSSSDTHASKVPDLHAPSSSTGGPLPSCFTPSPAPILNINSASFSQGLELMSGFSVPKETRMYPKLSGLHRSMESLQMPMSLPSAFPSSAPIPTPPTAPSEEDTEELPWSGSPRAGQLDSSQRDRNTLPKKGLRYQLQSQEETKERRHSHTAGGLPESDDQAELPSPPALSMSLSAKGQLTNIVSPTAATTPRITRSNSIPTHEAAFELYSGSQMGSTLSLAERPKGMIRSGSFRDPTDDVHGSVLSLASSASSTYSSAEERMQSEQIRKLRRELESSQEKVATLTSQLSANANLVAAFEQSLVNMTSRLRHLAETAEEKDTELLDLRETIDFLKKKNSEAQAVIQGALNASEATPKELRIKRQNSSDSISSLNSITSHSSIGSSKDADAKKKKKKSWVYELRSSFNKAFSIKKGPKSASSYSDIEEIATPDSSAPSSPKLQHGSTETASPSIKSSTSSSVGTEVTETPAHSVPHTRLFQANEEEEPEKKEVSELRSELWEKEMKLTDIRLEALNSAHQLDQLRETMHNMQLEVDLLKAENDRLKVAPGPSSGCTPGQVPGSSALSSPRRSLGLALSHPFSPSLTDTDLSPMDGISTCGSKEEVTLRVVVRMPPQHIIKGDLKQQEFFLGCSKVSGKVDWKMLDEAVFQVFKDYISKMDPASTLGLSTESIHGYSLSHVKRVLDAEPPEMPPCRRGVNNISVALKGLKEKCVDSLVFETLIPKPMMQHYISLLLKHRRLVLSGPSGTGKTYLTNRLAEYLVERSGREVTDGIVSTFNMHQQSCKDLQLYLSNLANQIDRETGIGDVPLVILLDDLSEAGSISELVNGALTCKYHKCPYIIGTTNQPVKMTPNHGLHLSFRMLTFSNNVEPANGFLVRYLRRKLVESDSDVNANKEELLRVLDWVPKLWYHLHTFLEKHSTSDFLIGPCFFLSCPIGIEDFRTWFIDLWNNSIIPYLQEGAKDGIKVHGQKAAWEDPVEWVRDTLPWPSAQQDQSKLYHLPPPSVGPHSTASPPEDRTVKDSTPNSLDSDPLMAMLLKLQEAANYIESPDRETILDPNLQATL</sequence>
<accession>Q8CH77</accession>
<accession>Q3U5B6</accession>
<accession>Q68EE8</accession>
<accession>Q6PB78</accession>
<accession>Q80TI7</accession>
<accession>Q8BKG2</accession>
<accession>Q8BUT5</accession>
<dbReference type="EMBL" id="AF307453">
    <property type="protein sequence ID" value="AAO13290.1"/>
    <property type="molecule type" value="mRNA"/>
</dbReference>
<dbReference type="EMBL" id="AK122458">
    <property type="protein sequence ID" value="BAC65740.1"/>
    <property type="status" value="ALT_INIT"/>
    <property type="molecule type" value="mRNA"/>
</dbReference>
<dbReference type="EMBL" id="AK053255">
    <property type="protein sequence ID" value="BAC35323.1"/>
    <property type="molecule type" value="mRNA"/>
</dbReference>
<dbReference type="EMBL" id="AK082667">
    <property type="protein sequence ID" value="BAC38568.1"/>
    <property type="molecule type" value="mRNA"/>
</dbReference>
<dbReference type="EMBL" id="AK153742">
    <property type="protein sequence ID" value="BAE32163.1"/>
    <property type="molecule type" value="mRNA"/>
</dbReference>
<dbReference type="EMBL" id="BC059840">
    <property type="protein sequence ID" value="AAH59840.1"/>
    <property type="molecule type" value="mRNA"/>
</dbReference>
<dbReference type="EMBL" id="BC080292">
    <property type="protein sequence ID" value="AAH80292.1"/>
    <property type="molecule type" value="mRNA"/>
</dbReference>
<dbReference type="CCDS" id="CCDS35720.1">
    <molecule id="Q8CH77-1"/>
</dbReference>
<dbReference type="RefSeq" id="NP_775613.2">
    <molecule id="Q8CH77-1"/>
    <property type="nucleotide sequence ID" value="NM_173437.2"/>
</dbReference>
<dbReference type="BioGRID" id="229647">
    <property type="interactions" value="10"/>
</dbReference>
<dbReference type="FunCoup" id="Q8CH77">
    <property type="interactions" value="356"/>
</dbReference>
<dbReference type="IntAct" id="Q8CH77">
    <property type="interactions" value="6"/>
</dbReference>
<dbReference type="MINT" id="Q8CH77"/>
<dbReference type="STRING" id="10090.ENSMUSP00000067241"/>
<dbReference type="GlyGen" id="Q8CH77">
    <property type="glycosylation" value="8 sites, 2 N-linked glycans (2 sites), 1 O-linked glycan (5 sites)"/>
</dbReference>
<dbReference type="iPTMnet" id="Q8CH77"/>
<dbReference type="PhosphoSitePlus" id="Q8CH77"/>
<dbReference type="jPOST" id="Q8CH77"/>
<dbReference type="PaxDb" id="10090-ENSMUSP00000067241"/>
<dbReference type="PeptideAtlas" id="Q8CH77"/>
<dbReference type="ProteomicsDB" id="287440">
    <molecule id="Q8CH77-1"/>
</dbReference>
<dbReference type="ProteomicsDB" id="287441">
    <molecule id="Q8CH77-2"/>
</dbReference>
<dbReference type="ProteomicsDB" id="287442">
    <molecule id="Q8CH77-3"/>
</dbReference>
<dbReference type="ProteomicsDB" id="287443">
    <molecule id="Q8CH77-4"/>
</dbReference>
<dbReference type="Pumba" id="Q8CH77"/>
<dbReference type="Antibodypedia" id="3226">
    <property type="antibodies" value="82 antibodies from 22 providers"/>
</dbReference>
<dbReference type="DNASU" id="215690"/>
<dbReference type="Ensembl" id="ENSMUST00000067414.13">
    <molecule id="Q8CH77-1"/>
    <property type="protein sequence ID" value="ENSMUSP00000067241.7"/>
    <property type="gene ID" value="ENSMUSG00000009418.18"/>
</dbReference>
<dbReference type="GeneID" id="215690"/>
<dbReference type="KEGG" id="mmu:215690"/>
<dbReference type="UCSC" id="uc007ctg.2">
    <molecule id="Q8CH77-1"/>
    <property type="organism name" value="mouse"/>
</dbReference>
<dbReference type="UCSC" id="uc007ctj.2">
    <molecule id="Q8CH77-2"/>
    <property type="organism name" value="mouse"/>
</dbReference>
<dbReference type="UCSC" id="uc007ctl.1">
    <molecule id="Q8CH77-4"/>
    <property type="organism name" value="mouse"/>
</dbReference>
<dbReference type="AGR" id="MGI:2183683"/>
<dbReference type="CTD" id="89796"/>
<dbReference type="MGI" id="MGI:2183683">
    <property type="gene designation" value="Nav1"/>
</dbReference>
<dbReference type="VEuPathDB" id="HostDB:ENSMUSG00000009418"/>
<dbReference type="eggNOG" id="ENOG502QSUE">
    <property type="taxonomic scope" value="Eukaryota"/>
</dbReference>
<dbReference type="GeneTree" id="ENSGT00940000156637"/>
<dbReference type="HOGENOM" id="CLU_001002_3_0_1"/>
<dbReference type="InParanoid" id="Q8CH77"/>
<dbReference type="PhylomeDB" id="Q8CH77"/>
<dbReference type="TreeFam" id="TF329881"/>
<dbReference type="BioGRID-ORCS" id="215690">
    <property type="hits" value="1 hit in 76 CRISPR screens"/>
</dbReference>
<dbReference type="CD-CODE" id="CE726F99">
    <property type="entry name" value="Postsynaptic density"/>
</dbReference>
<dbReference type="ChiTaRS" id="Nav1">
    <property type="organism name" value="mouse"/>
</dbReference>
<dbReference type="PRO" id="PR:Q8CH77"/>
<dbReference type="Proteomes" id="UP000000589">
    <property type="component" value="Chromosome 1"/>
</dbReference>
<dbReference type="RNAct" id="Q8CH77">
    <property type="molecule type" value="protein"/>
</dbReference>
<dbReference type="Bgee" id="ENSMUSG00000009418">
    <property type="expression patterns" value="Expressed in rostral migratory stream and 260 other cell types or tissues"/>
</dbReference>
<dbReference type="ExpressionAtlas" id="Q8CH77">
    <property type="expression patterns" value="baseline and differential"/>
</dbReference>
<dbReference type="GO" id="GO:0043194">
    <property type="term" value="C:axon initial segment"/>
    <property type="evidence" value="ECO:0000314"/>
    <property type="project" value="MGI"/>
</dbReference>
<dbReference type="GO" id="GO:0005737">
    <property type="term" value="C:cytoplasm"/>
    <property type="evidence" value="ECO:0007669"/>
    <property type="project" value="UniProtKB-KW"/>
</dbReference>
<dbReference type="GO" id="GO:0005874">
    <property type="term" value="C:microtubule"/>
    <property type="evidence" value="ECO:0007669"/>
    <property type="project" value="UniProtKB-KW"/>
</dbReference>
<dbReference type="GO" id="GO:0015630">
    <property type="term" value="C:microtubule cytoskeleton"/>
    <property type="evidence" value="ECO:0000314"/>
    <property type="project" value="MGI"/>
</dbReference>
<dbReference type="GO" id="GO:0016887">
    <property type="term" value="F:ATP hydrolysis activity"/>
    <property type="evidence" value="ECO:0007669"/>
    <property type="project" value="InterPro"/>
</dbReference>
<dbReference type="GO" id="GO:0001578">
    <property type="term" value="P:microtubule bundle formation"/>
    <property type="evidence" value="ECO:0000314"/>
    <property type="project" value="MGI"/>
</dbReference>
<dbReference type="GO" id="GO:0001764">
    <property type="term" value="P:neuron migration"/>
    <property type="evidence" value="ECO:0000315"/>
    <property type="project" value="MGI"/>
</dbReference>
<dbReference type="FunFam" id="3.40.50.300:FF:000409">
    <property type="entry name" value="Neuron navigator 1"/>
    <property type="match status" value="1"/>
</dbReference>
<dbReference type="Gene3D" id="3.40.50.300">
    <property type="entry name" value="P-loop containing nucleotide triphosphate hydrolases"/>
    <property type="match status" value="1"/>
</dbReference>
<dbReference type="InterPro" id="IPR003593">
    <property type="entry name" value="AAA+_ATPase"/>
</dbReference>
<dbReference type="InterPro" id="IPR039041">
    <property type="entry name" value="Nav/unc-53"/>
</dbReference>
<dbReference type="InterPro" id="IPR027417">
    <property type="entry name" value="P-loop_NTPase"/>
</dbReference>
<dbReference type="PANTHER" id="PTHR12784:SF3">
    <property type="entry name" value="NEURON NAVIGATOR 1"/>
    <property type="match status" value="1"/>
</dbReference>
<dbReference type="PANTHER" id="PTHR12784">
    <property type="entry name" value="STEERIN"/>
    <property type="match status" value="1"/>
</dbReference>
<dbReference type="Pfam" id="PF25408">
    <property type="entry name" value="AAA_lid_NAV1"/>
    <property type="match status" value="1"/>
</dbReference>
<dbReference type="Pfam" id="PF23092">
    <property type="entry name" value="Ubiquitin_6"/>
    <property type="match status" value="1"/>
</dbReference>
<dbReference type="SMART" id="SM00382">
    <property type="entry name" value="AAA"/>
    <property type="match status" value="1"/>
</dbReference>
<dbReference type="SUPFAM" id="SSF52540">
    <property type="entry name" value="P-loop containing nucleoside triphosphate hydrolases"/>
    <property type="match status" value="1"/>
</dbReference>
<organism>
    <name type="scientific">Mus musculus</name>
    <name type="common">Mouse</name>
    <dbReference type="NCBI Taxonomy" id="10090"/>
    <lineage>
        <taxon>Eukaryota</taxon>
        <taxon>Metazoa</taxon>
        <taxon>Chordata</taxon>
        <taxon>Craniata</taxon>
        <taxon>Vertebrata</taxon>
        <taxon>Euteleostomi</taxon>
        <taxon>Mammalia</taxon>
        <taxon>Eutheria</taxon>
        <taxon>Euarchontoglires</taxon>
        <taxon>Glires</taxon>
        <taxon>Rodentia</taxon>
        <taxon>Myomorpha</taxon>
        <taxon>Muroidea</taxon>
        <taxon>Muridae</taxon>
        <taxon>Murinae</taxon>
        <taxon>Mus</taxon>
        <taxon>Mus</taxon>
    </lineage>
</organism>
<keyword id="KW-0007">Acetylation</keyword>
<keyword id="KW-0025">Alternative splicing</keyword>
<keyword id="KW-0175">Coiled coil</keyword>
<keyword id="KW-0963">Cytoplasm</keyword>
<keyword id="KW-0206">Cytoskeleton</keyword>
<keyword id="KW-0217">Developmental protein</keyword>
<keyword id="KW-0221">Differentiation</keyword>
<keyword id="KW-0488">Methylation</keyword>
<keyword id="KW-0493">Microtubule</keyword>
<keyword id="KW-0524">Neurogenesis</keyword>
<keyword id="KW-0597">Phosphoprotein</keyword>
<keyword id="KW-1185">Reference proteome</keyword>